<comment type="function">
    <text evidence="1">Cell wall formation.</text>
</comment>
<comment type="catalytic activity">
    <reaction>
        <text>UDP-N-acetyl-alpha-D-muramate + NADP(+) = UDP-N-acetyl-3-O-(1-carboxyvinyl)-alpha-D-glucosamine + NADPH + H(+)</text>
        <dbReference type="Rhea" id="RHEA:12248"/>
        <dbReference type="ChEBI" id="CHEBI:15378"/>
        <dbReference type="ChEBI" id="CHEBI:57783"/>
        <dbReference type="ChEBI" id="CHEBI:58349"/>
        <dbReference type="ChEBI" id="CHEBI:68483"/>
        <dbReference type="ChEBI" id="CHEBI:70757"/>
        <dbReference type="EC" id="1.3.1.98"/>
    </reaction>
</comment>
<comment type="cofactor">
    <cofactor evidence="1">
        <name>FAD</name>
        <dbReference type="ChEBI" id="CHEBI:57692"/>
    </cofactor>
</comment>
<comment type="pathway">
    <text>Cell wall biogenesis; peptidoglycan biosynthesis.</text>
</comment>
<comment type="subcellular location">
    <subcellularLocation>
        <location evidence="1">Cytoplasm</location>
    </subcellularLocation>
</comment>
<comment type="similarity">
    <text evidence="2">Belongs to the MurB family.</text>
</comment>
<accession>Q9X239</accession>
<dbReference type="EC" id="1.3.1.98"/>
<dbReference type="EMBL" id="AE000512">
    <property type="protein sequence ID" value="AAD36780.1"/>
    <property type="molecule type" value="Genomic_DNA"/>
</dbReference>
<dbReference type="PIR" id="C72222">
    <property type="entry name" value="C72222"/>
</dbReference>
<dbReference type="RefSeq" id="NP_229513.1">
    <property type="nucleotide sequence ID" value="NC_000853.1"/>
</dbReference>
<dbReference type="SMR" id="Q9X239"/>
<dbReference type="FunCoup" id="Q9X239">
    <property type="interactions" value="290"/>
</dbReference>
<dbReference type="STRING" id="243274.TM_1714"/>
<dbReference type="PaxDb" id="243274-THEMA_05670"/>
<dbReference type="EnsemblBacteria" id="AAD36780">
    <property type="protein sequence ID" value="AAD36780"/>
    <property type="gene ID" value="TM_1714"/>
</dbReference>
<dbReference type="KEGG" id="tma:TM1714"/>
<dbReference type="KEGG" id="tmi:THEMA_05670"/>
<dbReference type="PATRIC" id="fig|243274.18.peg.1095"/>
<dbReference type="eggNOG" id="COG0812">
    <property type="taxonomic scope" value="Bacteria"/>
</dbReference>
<dbReference type="InParanoid" id="Q9X239"/>
<dbReference type="OrthoDB" id="9804753at2"/>
<dbReference type="UniPathway" id="UPA00219"/>
<dbReference type="Proteomes" id="UP000008183">
    <property type="component" value="Chromosome"/>
</dbReference>
<dbReference type="GO" id="GO:0005829">
    <property type="term" value="C:cytosol"/>
    <property type="evidence" value="ECO:0000318"/>
    <property type="project" value="GO_Central"/>
</dbReference>
<dbReference type="GO" id="GO:0071949">
    <property type="term" value="F:FAD binding"/>
    <property type="evidence" value="ECO:0007669"/>
    <property type="project" value="InterPro"/>
</dbReference>
<dbReference type="GO" id="GO:0050660">
    <property type="term" value="F:flavin adenine dinucleotide binding"/>
    <property type="evidence" value="ECO:0000318"/>
    <property type="project" value="GO_Central"/>
</dbReference>
<dbReference type="GO" id="GO:0008762">
    <property type="term" value="F:UDP-N-acetylmuramate dehydrogenase activity"/>
    <property type="evidence" value="ECO:0000318"/>
    <property type="project" value="GO_Central"/>
</dbReference>
<dbReference type="GO" id="GO:0051301">
    <property type="term" value="P:cell division"/>
    <property type="evidence" value="ECO:0007669"/>
    <property type="project" value="UniProtKB-KW"/>
</dbReference>
<dbReference type="GO" id="GO:0071555">
    <property type="term" value="P:cell wall organization"/>
    <property type="evidence" value="ECO:0000318"/>
    <property type="project" value="GO_Central"/>
</dbReference>
<dbReference type="GO" id="GO:0009252">
    <property type="term" value="P:peptidoglycan biosynthetic process"/>
    <property type="evidence" value="ECO:0007669"/>
    <property type="project" value="UniProtKB-UniRule"/>
</dbReference>
<dbReference type="GO" id="GO:0008360">
    <property type="term" value="P:regulation of cell shape"/>
    <property type="evidence" value="ECO:0007669"/>
    <property type="project" value="UniProtKB-KW"/>
</dbReference>
<dbReference type="Gene3D" id="3.30.465.10">
    <property type="match status" value="1"/>
</dbReference>
<dbReference type="Gene3D" id="3.90.78.10">
    <property type="entry name" value="UDP-N-acetylenolpyruvoylglucosamine reductase, C-terminal domain"/>
    <property type="match status" value="1"/>
</dbReference>
<dbReference type="Gene3D" id="3.30.43.10">
    <property type="entry name" value="Uridine Diphospho-n-acetylenolpyruvylglucosamine Reductase, domain 2"/>
    <property type="match status" value="1"/>
</dbReference>
<dbReference type="HAMAP" id="MF_00037">
    <property type="entry name" value="MurB"/>
    <property type="match status" value="1"/>
</dbReference>
<dbReference type="InterPro" id="IPR016166">
    <property type="entry name" value="FAD-bd_PCMH"/>
</dbReference>
<dbReference type="InterPro" id="IPR036318">
    <property type="entry name" value="FAD-bd_PCMH-like_sf"/>
</dbReference>
<dbReference type="InterPro" id="IPR016167">
    <property type="entry name" value="FAD-bd_PCMH_sub1"/>
</dbReference>
<dbReference type="InterPro" id="IPR016169">
    <property type="entry name" value="FAD-bd_PCMH_sub2"/>
</dbReference>
<dbReference type="InterPro" id="IPR003170">
    <property type="entry name" value="MurB"/>
</dbReference>
<dbReference type="InterPro" id="IPR011601">
    <property type="entry name" value="MurB_C"/>
</dbReference>
<dbReference type="InterPro" id="IPR036635">
    <property type="entry name" value="MurB_C_sf"/>
</dbReference>
<dbReference type="InterPro" id="IPR006094">
    <property type="entry name" value="Oxid_FAD_bind_N"/>
</dbReference>
<dbReference type="NCBIfam" id="TIGR00179">
    <property type="entry name" value="murB"/>
    <property type="match status" value="1"/>
</dbReference>
<dbReference type="NCBIfam" id="NF010480">
    <property type="entry name" value="PRK13905.1"/>
    <property type="match status" value="1"/>
</dbReference>
<dbReference type="PANTHER" id="PTHR21071">
    <property type="entry name" value="UDP-N-ACETYLENOLPYRUVOYLGLUCOSAMINE REDUCTASE"/>
    <property type="match status" value="1"/>
</dbReference>
<dbReference type="PANTHER" id="PTHR21071:SF4">
    <property type="entry name" value="UDP-N-ACETYLENOLPYRUVOYLGLUCOSAMINE REDUCTASE"/>
    <property type="match status" value="1"/>
</dbReference>
<dbReference type="Pfam" id="PF01565">
    <property type="entry name" value="FAD_binding_4"/>
    <property type="match status" value="1"/>
</dbReference>
<dbReference type="Pfam" id="PF02873">
    <property type="entry name" value="MurB_C"/>
    <property type="match status" value="1"/>
</dbReference>
<dbReference type="SUPFAM" id="SSF56176">
    <property type="entry name" value="FAD-binding/transporter-associated domain-like"/>
    <property type="match status" value="1"/>
</dbReference>
<dbReference type="SUPFAM" id="SSF56194">
    <property type="entry name" value="Uridine diphospho-N-Acetylenolpyruvylglucosamine reductase, MurB, C-terminal domain"/>
    <property type="match status" value="1"/>
</dbReference>
<dbReference type="PROSITE" id="PS51387">
    <property type="entry name" value="FAD_PCMH"/>
    <property type="match status" value="1"/>
</dbReference>
<protein>
    <recommendedName>
        <fullName>UDP-N-acetylenolpyruvoylglucosamine reductase</fullName>
        <ecNumber>1.3.1.98</ecNumber>
    </recommendedName>
    <alternativeName>
        <fullName>UDP-N-acetylmuramate dehydrogenase</fullName>
    </alternativeName>
</protein>
<evidence type="ECO:0000250" key="1"/>
<evidence type="ECO:0000305" key="2"/>
<organism>
    <name type="scientific">Thermotoga maritima (strain ATCC 43589 / DSM 3109 / JCM 10099 / NBRC 100826 / MSB8)</name>
    <dbReference type="NCBI Taxonomy" id="243274"/>
    <lineage>
        <taxon>Bacteria</taxon>
        <taxon>Thermotogati</taxon>
        <taxon>Thermotogota</taxon>
        <taxon>Thermotogae</taxon>
        <taxon>Thermotogales</taxon>
        <taxon>Thermotogaceae</taxon>
        <taxon>Thermotoga</taxon>
    </lineage>
</organism>
<sequence length="284" mass="32253">MFEKLSCHTSIKIGGRVKYLVLPNDVFSLERAITVLKDLPFQIMGLGTNLLVQDEDLDIAVLKTERLNQIEIKGEKVLVESGTPLKRLCLFLMEAELGGLEFAYGIPGSVGGAIYMNAGAYGGEIGEFVEAVEVLRDGEKTWLSRNEIFFGYRDSTFKREKLIITRVMMSFKKEKKETIKAKMDDYMRRRLEKQPLDLPSAGSVFKRPREDFYVGKAIESLGLKGYRIGGAQISEKHAGFIVNAGSATFDDVMKLIDFVRKKVKEKYGVELETEVEIWWNGRRW</sequence>
<name>MURB_THEMA</name>
<feature type="chain" id="PRO_0000179280" description="UDP-N-acetylenolpyruvoylglucosamine reductase">
    <location>
        <begin position="1"/>
        <end position="284"/>
    </location>
</feature>
<feature type="domain" description="FAD-binding PCMH-type">
    <location>
        <begin position="12"/>
        <end position="174"/>
    </location>
</feature>
<feature type="active site" evidence="1">
    <location>
        <position position="153"/>
    </location>
</feature>
<feature type="active site" description="Proton donor" evidence="1">
    <location>
        <position position="203"/>
    </location>
</feature>
<feature type="active site" evidence="1">
    <location>
        <position position="274"/>
    </location>
</feature>
<reference key="1">
    <citation type="journal article" date="1999" name="Nature">
        <title>Evidence for lateral gene transfer between Archaea and Bacteria from genome sequence of Thermotoga maritima.</title>
        <authorList>
            <person name="Nelson K.E."/>
            <person name="Clayton R.A."/>
            <person name="Gill S.R."/>
            <person name="Gwinn M.L."/>
            <person name="Dodson R.J."/>
            <person name="Haft D.H."/>
            <person name="Hickey E.K."/>
            <person name="Peterson J.D."/>
            <person name="Nelson W.C."/>
            <person name="Ketchum K.A."/>
            <person name="McDonald L.A."/>
            <person name="Utterback T.R."/>
            <person name="Malek J.A."/>
            <person name="Linher K.D."/>
            <person name="Garrett M.M."/>
            <person name="Stewart A.M."/>
            <person name="Cotton M.D."/>
            <person name="Pratt M.S."/>
            <person name="Phillips C.A."/>
            <person name="Richardson D.L."/>
            <person name="Heidelberg J.F."/>
            <person name="Sutton G.G."/>
            <person name="Fleischmann R.D."/>
            <person name="Eisen J.A."/>
            <person name="White O."/>
            <person name="Salzberg S.L."/>
            <person name="Smith H.O."/>
            <person name="Venter J.C."/>
            <person name="Fraser C.M."/>
        </authorList>
    </citation>
    <scope>NUCLEOTIDE SEQUENCE [LARGE SCALE GENOMIC DNA]</scope>
    <source>
        <strain>ATCC 43589 / DSM 3109 / JCM 10099 / NBRC 100826 / MSB8</strain>
    </source>
</reference>
<gene>
    <name type="primary">murB</name>
    <name type="ordered locus">TM_1714</name>
</gene>
<proteinExistence type="inferred from homology"/>
<keyword id="KW-0131">Cell cycle</keyword>
<keyword id="KW-0132">Cell division</keyword>
<keyword id="KW-0133">Cell shape</keyword>
<keyword id="KW-0961">Cell wall biogenesis/degradation</keyword>
<keyword id="KW-0963">Cytoplasm</keyword>
<keyword id="KW-0274">FAD</keyword>
<keyword id="KW-0285">Flavoprotein</keyword>
<keyword id="KW-0521">NADP</keyword>
<keyword id="KW-0560">Oxidoreductase</keyword>
<keyword id="KW-0573">Peptidoglycan synthesis</keyword>
<keyword id="KW-1185">Reference proteome</keyword>